<sequence>MEPLIHPLLDEATVSHLRASLLTDETSWQDGRKTAGYQAAEVKNNLQLKRYSKTAKENSQLVIEKLESDPLVKSFALPRHIHGVMFSRSGIGQGYGMHVDNAYMSSGRSDLSFTLFLSEPESYDGGALCIQTLQDSKQVKLPAGQLIIYPSTSLHAVETVTAGERLVCVGWIQSYISSNEDRTILFGLNAGARALLAEHGRSPELDLIFQAYTNLLRRLGS</sequence>
<comment type="cofactor">
    <cofactor evidence="1">
        <name>Fe(2+)</name>
        <dbReference type="ChEBI" id="CHEBI:29033"/>
    </cofactor>
    <text evidence="1">Binds 1 Fe(2+) ion per subunit.</text>
</comment>
<comment type="cofactor">
    <cofactor evidence="1">
        <name>L-ascorbate</name>
        <dbReference type="ChEBI" id="CHEBI:38290"/>
    </cofactor>
</comment>
<organism>
    <name type="scientific">Prochlorococcus marinus (strain MIT 9303)</name>
    <dbReference type="NCBI Taxonomy" id="59922"/>
    <lineage>
        <taxon>Bacteria</taxon>
        <taxon>Bacillati</taxon>
        <taxon>Cyanobacteriota</taxon>
        <taxon>Cyanophyceae</taxon>
        <taxon>Synechococcales</taxon>
        <taxon>Prochlorococcaceae</taxon>
        <taxon>Prochlorococcus</taxon>
    </lineage>
</organism>
<feature type="chain" id="PRO_0000346503" description="PKHD-type hydroxylase P9303_20491">
    <location>
        <begin position="1"/>
        <end position="221"/>
    </location>
</feature>
<feature type="domain" description="Fe2OG dioxygenase" evidence="1">
    <location>
        <begin position="80"/>
        <end position="174"/>
    </location>
</feature>
<feature type="binding site" evidence="1">
    <location>
        <position position="98"/>
    </location>
    <ligand>
        <name>Fe cation</name>
        <dbReference type="ChEBI" id="CHEBI:24875"/>
    </ligand>
</feature>
<feature type="binding site" evidence="1">
    <location>
        <position position="100"/>
    </location>
    <ligand>
        <name>Fe cation</name>
        <dbReference type="ChEBI" id="CHEBI:24875"/>
    </ligand>
</feature>
<feature type="binding site" evidence="1">
    <location>
        <position position="155"/>
    </location>
    <ligand>
        <name>Fe cation</name>
        <dbReference type="ChEBI" id="CHEBI:24875"/>
    </ligand>
</feature>
<feature type="binding site" evidence="1">
    <location>
        <position position="165"/>
    </location>
    <ligand>
        <name>2-oxoglutarate</name>
        <dbReference type="ChEBI" id="CHEBI:16810"/>
    </ligand>
</feature>
<protein>
    <recommendedName>
        <fullName evidence="1">PKHD-type hydroxylase P9303_20491</fullName>
        <ecNumber evidence="1">1.14.11.-</ecNumber>
    </recommendedName>
</protein>
<evidence type="ECO:0000255" key="1">
    <source>
        <dbReference type="HAMAP-Rule" id="MF_00657"/>
    </source>
</evidence>
<reference key="1">
    <citation type="journal article" date="2007" name="PLoS Genet.">
        <title>Patterns and implications of gene gain and loss in the evolution of Prochlorococcus.</title>
        <authorList>
            <person name="Kettler G.C."/>
            <person name="Martiny A.C."/>
            <person name="Huang K."/>
            <person name="Zucker J."/>
            <person name="Coleman M.L."/>
            <person name="Rodrigue S."/>
            <person name="Chen F."/>
            <person name="Lapidus A."/>
            <person name="Ferriera S."/>
            <person name="Johnson J."/>
            <person name="Steglich C."/>
            <person name="Church G.M."/>
            <person name="Richardson P."/>
            <person name="Chisholm S.W."/>
        </authorList>
    </citation>
    <scope>NUCLEOTIDE SEQUENCE [LARGE SCALE GENOMIC DNA]</scope>
    <source>
        <strain>MIT 9303</strain>
    </source>
</reference>
<gene>
    <name type="ordered locus">P9303_20491</name>
</gene>
<name>Y2049_PROM3</name>
<proteinExistence type="inferred from homology"/>
<keyword id="KW-0223">Dioxygenase</keyword>
<keyword id="KW-0408">Iron</keyword>
<keyword id="KW-0479">Metal-binding</keyword>
<keyword id="KW-0560">Oxidoreductase</keyword>
<keyword id="KW-0847">Vitamin C</keyword>
<dbReference type="EC" id="1.14.11.-" evidence="1"/>
<dbReference type="EMBL" id="CP000554">
    <property type="protein sequence ID" value="ABM78787.1"/>
    <property type="molecule type" value="Genomic_DNA"/>
</dbReference>
<dbReference type="RefSeq" id="WP_011826665.1">
    <property type="nucleotide sequence ID" value="NC_008820.1"/>
</dbReference>
<dbReference type="SMR" id="A2CBC7"/>
<dbReference type="KEGG" id="pmf:P9303_20491"/>
<dbReference type="HOGENOM" id="CLU_106663_0_0_3"/>
<dbReference type="BioCyc" id="PMAR59922:G1G80-1787-MONOMER"/>
<dbReference type="Proteomes" id="UP000002274">
    <property type="component" value="Chromosome"/>
</dbReference>
<dbReference type="GO" id="GO:0016706">
    <property type="term" value="F:2-oxoglutarate-dependent dioxygenase activity"/>
    <property type="evidence" value="ECO:0007669"/>
    <property type="project" value="UniProtKB-UniRule"/>
</dbReference>
<dbReference type="GO" id="GO:0005506">
    <property type="term" value="F:iron ion binding"/>
    <property type="evidence" value="ECO:0007669"/>
    <property type="project" value="UniProtKB-UniRule"/>
</dbReference>
<dbReference type="GO" id="GO:0031418">
    <property type="term" value="F:L-ascorbic acid binding"/>
    <property type="evidence" value="ECO:0007669"/>
    <property type="project" value="UniProtKB-KW"/>
</dbReference>
<dbReference type="GO" id="GO:0006974">
    <property type="term" value="P:DNA damage response"/>
    <property type="evidence" value="ECO:0007669"/>
    <property type="project" value="TreeGrafter"/>
</dbReference>
<dbReference type="GO" id="GO:0006879">
    <property type="term" value="P:intracellular iron ion homeostasis"/>
    <property type="evidence" value="ECO:0007669"/>
    <property type="project" value="TreeGrafter"/>
</dbReference>
<dbReference type="Gene3D" id="2.60.120.620">
    <property type="entry name" value="q2cbj1_9rhob like domain"/>
    <property type="match status" value="1"/>
</dbReference>
<dbReference type="Gene3D" id="4.10.860.20">
    <property type="entry name" value="Rabenosyn, Rab binding domain"/>
    <property type="match status" value="1"/>
</dbReference>
<dbReference type="HAMAP" id="MF_00657">
    <property type="entry name" value="Hydroxyl_YbiX"/>
    <property type="match status" value="1"/>
</dbReference>
<dbReference type="InterPro" id="IPR005123">
    <property type="entry name" value="Oxoglu/Fe-dep_dioxygenase_dom"/>
</dbReference>
<dbReference type="InterPro" id="IPR023550">
    <property type="entry name" value="PKHD_hydroxylase"/>
</dbReference>
<dbReference type="InterPro" id="IPR006620">
    <property type="entry name" value="Pro_4_hyd_alph"/>
</dbReference>
<dbReference type="InterPro" id="IPR044862">
    <property type="entry name" value="Pro_4_hyd_alph_FE2OG_OXY"/>
</dbReference>
<dbReference type="NCBIfam" id="NF003974">
    <property type="entry name" value="PRK05467.1-3"/>
    <property type="match status" value="1"/>
</dbReference>
<dbReference type="NCBIfam" id="NF003975">
    <property type="entry name" value="PRK05467.1-4"/>
    <property type="match status" value="1"/>
</dbReference>
<dbReference type="PANTHER" id="PTHR41536">
    <property type="entry name" value="PKHD-TYPE HYDROXYLASE YBIX"/>
    <property type="match status" value="1"/>
</dbReference>
<dbReference type="PANTHER" id="PTHR41536:SF1">
    <property type="entry name" value="PKHD-TYPE HYDROXYLASE YBIX"/>
    <property type="match status" value="1"/>
</dbReference>
<dbReference type="Pfam" id="PF13640">
    <property type="entry name" value="2OG-FeII_Oxy_3"/>
    <property type="match status" value="1"/>
</dbReference>
<dbReference type="SMART" id="SM00702">
    <property type="entry name" value="P4Hc"/>
    <property type="match status" value="1"/>
</dbReference>
<dbReference type="PROSITE" id="PS51471">
    <property type="entry name" value="FE2OG_OXY"/>
    <property type="match status" value="1"/>
</dbReference>
<accession>A2CBC7</accession>